<protein>
    <recommendedName>
        <fullName evidence="1">Undecaprenyl-diphosphatase</fullName>
        <ecNumber evidence="1">3.6.1.27</ecNumber>
    </recommendedName>
    <alternativeName>
        <fullName evidence="1">Bacitracin resistance protein</fullName>
    </alternativeName>
    <alternativeName>
        <fullName evidence="1">Undecaprenyl pyrophosphate phosphatase</fullName>
    </alternativeName>
</protein>
<proteinExistence type="inferred from homology"/>
<keyword id="KW-0046">Antibiotic resistance</keyword>
<keyword id="KW-0997">Cell inner membrane</keyword>
<keyword id="KW-1003">Cell membrane</keyword>
<keyword id="KW-0133">Cell shape</keyword>
<keyword id="KW-0961">Cell wall biogenesis/degradation</keyword>
<keyword id="KW-0378">Hydrolase</keyword>
<keyword id="KW-0472">Membrane</keyword>
<keyword id="KW-0573">Peptidoglycan synthesis</keyword>
<keyword id="KW-0812">Transmembrane</keyword>
<keyword id="KW-1133">Transmembrane helix</keyword>
<name>UPPP_SHEB9</name>
<reference key="1">
    <citation type="submission" date="2007-11" db="EMBL/GenBank/DDBJ databases">
        <title>Complete sequence of chromosome of Shewanella baltica OS195.</title>
        <authorList>
            <consortium name="US DOE Joint Genome Institute"/>
            <person name="Copeland A."/>
            <person name="Lucas S."/>
            <person name="Lapidus A."/>
            <person name="Barry K."/>
            <person name="Glavina del Rio T."/>
            <person name="Dalin E."/>
            <person name="Tice H."/>
            <person name="Pitluck S."/>
            <person name="Chain P."/>
            <person name="Malfatti S."/>
            <person name="Shin M."/>
            <person name="Vergez L."/>
            <person name="Schmutz J."/>
            <person name="Larimer F."/>
            <person name="Land M."/>
            <person name="Hauser L."/>
            <person name="Kyrpides N."/>
            <person name="Kim E."/>
            <person name="Brettar I."/>
            <person name="Rodrigues J."/>
            <person name="Konstantinidis K."/>
            <person name="Klappenbach J."/>
            <person name="Hofle M."/>
            <person name="Tiedje J."/>
            <person name="Richardson P."/>
        </authorList>
    </citation>
    <scope>NUCLEOTIDE SEQUENCE [LARGE SCALE GENOMIC DNA]</scope>
    <source>
        <strain>OS195</strain>
    </source>
</reference>
<evidence type="ECO:0000255" key="1">
    <source>
        <dbReference type="HAMAP-Rule" id="MF_01006"/>
    </source>
</evidence>
<accession>A9L5I7</accession>
<sequence>MDTFQVIILALIQGLTEFLPISSSAHLILPAQLLGWEDQGLSFDVAVNTGSLFAVVIYFRHELWTMFNAWIASIFRGQQSEDSKLAWWIILATLPAVFFGFLAKDFIATHLRNAEVIAVTTVVFGLLLWWADKMSRRDLTVYQTGWRKALLIGFAQALALIPGTSRSGATMTAALMLGLSRDAAARFSFLMSVPVSLGAAILVGKDLAKSELPIDYQALILGTLISFVAAYACIHYFLKIISRMGMTPFVIYRLALGAVLCGFIFF</sequence>
<gene>
    <name evidence="1" type="primary">uppP</name>
    <name type="ordered locus">Sbal195_1229</name>
</gene>
<dbReference type="EC" id="3.6.1.27" evidence="1"/>
<dbReference type="EMBL" id="CP000891">
    <property type="protein sequence ID" value="ABX48404.1"/>
    <property type="molecule type" value="Genomic_DNA"/>
</dbReference>
<dbReference type="RefSeq" id="WP_006080730.1">
    <property type="nucleotide sequence ID" value="NC_009997.1"/>
</dbReference>
<dbReference type="SMR" id="A9L5I7"/>
<dbReference type="KEGG" id="sbn:Sbal195_1229"/>
<dbReference type="HOGENOM" id="CLU_060296_1_0_6"/>
<dbReference type="Proteomes" id="UP000000770">
    <property type="component" value="Chromosome"/>
</dbReference>
<dbReference type="GO" id="GO:0005886">
    <property type="term" value="C:plasma membrane"/>
    <property type="evidence" value="ECO:0007669"/>
    <property type="project" value="UniProtKB-SubCell"/>
</dbReference>
<dbReference type="GO" id="GO:0050380">
    <property type="term" value="F:undecaprenyl-diphosphatase activity"/>
    <property type="evidence" value="ECO:0007669"/>
    <property type="project" value="UniProtKB-UniRule"/>
</dbReference>
<dbReference type="GO" id="GO:0071555">
    <property type="term" value="P:cell wall organization"/>
    <property type="evidence" value="ECO:0007669"/>
    <property type="project" value="UniProtKB-KW"/>
</dbReference>
<dbReference type="GO" id="GO:0009252">
    <property type="term" value="P:peptidoglycan biosynthetic process"/>
    <property type="evidence" value="ECO:0007669"/>
    <property type="project" value="UniProtKB-KW"/>
</dbReference>
<dbReference type="GO" id="GO:0008360">
    <property type="term" value="P:regulation of cell shape"/>
    <property type="evidence" value="ECO:0007669"/>
    <property type="project" value="UniProtKB-KW"/>
</dbReference>
<dbReference type="GO" id="GO:0046677">
    <property type="term" value="P:response to antibiotic"/>
    <property type="evidence" value="ECO:0007669"/>
    <property type="project" value="UniProtKB-UniRule"/>
</dbReference>
<dbReference type="HAMAP" id="MF_01006">
    <property type="entry name" value="Undec_diphosphatase"/>
    <property type="match status" value="1"/>
</dbReference>
<dbReference type="InterPro" id="IPR003824">
    <property type="entry name" value="UppP"/>
</dbReference>
<dbReference type="NCBIfam" id="NF001393">
    <property type="entry name" value="PRK00281.2-4"/>
    <property type="match status" value="1"/>
</dbReference>
<dbReference type="NCBIfam" id="TIGR00753">
    <property type="entry name" value="undec_PP_bacA"/>
    <property type="match status" value="1"/>
</dbReference>
<dbReference type="PANTHER" id="PTHR30622">
    <property type="entry name" value="UNDECAPRENYL-DIPHOSPHATASE"/>
    <property type="match status" value="1"/>
</dbReference>
<dbReference type="PANTHER" id="PTHR30622:SF4">
    <property type="entry name" value="UNDECAPRENYL-DIPHOSPHATASE"/>
    <property type="match status" value="1"/>
</dbReference>
<dbReference type="Pfam" id="PF02673">
    <property type="entry name" value="BacA"/>
    <property type="match status" value="1"/>
</dbReference>
<comment type="function">
    <text evidence="1">Catalyzes the dephosphorylation of undecaprenyl diphosphate (UPP). Confers resistance to bacitracin.</text>
</comment>
<comment type="catalytic activity">
    <reaction evidence="1">
        <text>di-trans,octa-cis-undecaprenyl diphosphate + H2O = di-trans,octa-cis-undecaprenyl phosphate + phosphate + H(+)</text>
        <dbReference type="Rhea" id="RHEA:28094"/>
        <dbReference type="ChEBI" id="CHEBI:15377"/>
        <dbReference type="ChEBI" id="CHEBI:15378"/>
        <dbReference type="ChEBI" id="CHEBI:43474"/>
        <dbReference type="ChEBI" id="CHEBI:58405"/>
        <dbReference type="ChEBI" id="CHEBI:60392"/>
        <dbReference type="EC" id="3.6.1.27"/>
    </reaction>
</comment>
<comment type="subcellular location">
    <subcellularLocation>
        <location evidence="1">Cell inner membrane</location>
        <topology evidence="1">Multi-pass membrane protein</topology>
    </subcellularLocation>
</comment>
<comment type="miscellaneous">
    <text>Bacitracin is thought to be involved in the inhibition of peptidoglycan synthesis by sequestering undecaprenyl diphosphate, thereby reducing the pool of lipid carrier available.</text>
</comment>
<comment type="similarity">
    <text evidence="1">Belongs to the UppP family.</text>
</comment>
<feature type="chain" id="PRO_1000083987" description="Undecaprenyl-diphosphatase">
    <location>
        <begin position="1"/>
        <end position="266"/>
    </location>
</feature>
<feature type="transmembrane region" description="Helical" evidence="1">
    <location>
        <begin position="1"/>
        <end position="21"/>
    </location>
</feature>
<feature type="transmembrane region" description="Helical" evidence="1">
    <location>
        <begin position="39"/>
        <end position="59"/>
    </location>
</feature>
<feature type="transmembrane region" description="Helical" evidence="1">
    <location>
        <begin position="87"/>
        <end position="107"/>
    </location>
</feature>
<feature type="transmembrane region" description="Helical" evidence="1">
    <location>
        <begin position="114"/>
        <end position="134"/>
    </location>
</feature>
<feature type="transmembrane region" description="Helical" evidence="1">
    <location>
        <begin position="149"/>
        <end position="169"/>
    </location>
</feature>
<feature type="transmembrane region" description="Helical" evidence="1">
    <location>
        <begin position="183"/>
        <end position="203"/>
    </location>
</feature>
<feature type="transmembrane region" description="Helical" evidence="1">
    <location>
        <begin position="218"/>
        <end position="238"/>
    </location>
</feature>
<feature type="transmembrane region" description="Helical" evidence="1">
    <location>
        <begin position="246"/>
        <end position="266"/>
    </location>
</feature>
<organism>
    <name type="scientific">Shewanella baltica (strain OS195)</name>
    <dbReference type="NCBI Taxonomy" id="399599"/>
    <lineage>
        <taxon>Bacteria</taxon>
        <taxon>Pseudomonadati</taxon>
        <taxon>Pseudomonadota</taxon>
        <taxon>Gammaproteobacteria</taxon>
        <taxon>Alteromonadales</taxon>
        <taxon>Shewanellaceae</taxon>
        <taxon>Shewanella</taxon>
    </lineage>
</organism>